<sequence>MSLFRTYVRVLSYLNQEKNAFLLICTANITLAIITIAEPILFGHVIDTIADKSDTLVTLAVWMCFGISNIIAYVLVARGADRLAHRCRLTVLEKSFARIISMPLIWHQQRGTSHALHTLLRATDSMSSIWLEFMRQHLSTFVALFVLVPVTFKMNWRLSIVLMVLAILYILIARLVMQKTKNGQAAVEHYHHNLFKHITDSISNVSIVQSYNRITEETSALHQHTNNLLSAQTPVLNWWALASGLNRMASTISIVCVLLLGAFFVIKGQLSVGEVVTFVGFSQLMIGRLDQISGFINLAVSSQAKLQEFFDMEDSTFQTNEPANLPSLPNVKGAIQFHHVTYEFPNSSQGVFDISFEVKAGQTVAIVGPTGAGKTTLINLLQRVYDPTVGYISIDGININSINRESLRKALATVFQDAGLFDRTIRDNISIGKTGATDEELYEATKTASAHDFILKKSKNYDTLVGERGSQLSGGERQRLAIARAILKNAPILILDEATSALDVETEIRVKNAIDCISQNRTTFIIAHRLSTIRNADLVLFLDQGRLIEKGSFQELINKDGHFYKLLKRGGLTINQPATKEKDDNIIPLRKAMAL</sequence>
<evidence type="ECO:0000250" key="1"/>
<evidence type="ECO:0000255" key="2">
    <source>
        <dbReference type="HAMAP-Rule" id="MF_01728"/>
    </source>
</evidence>
<evidence type="ECO:0000305" key="3"/>
<gene>
    <name evidence="2" type="primary">ndvA</name>
</gene>
<accession>P70864</accession>
<name>NDVA_BARBA</name>
<comment type="function">
    <text evidence="1">Involved in beta-(1--&gt;2)glucan export. Transmembrane domains (TMD) form a pore in the inner membrane and the ATP-binding domain (NBD) is responsible for energy generation (By similarity).</text>
</comment>
<comment type="catalytic activity">
    <reaction evidence="2">
        <text>[(1-&gt;2)-beta-D-glucosyl](n)(in) + ATP + H2O = [(1-&gt;2)-beta-D-glucosyl](n)(out) + ADP + phosphate + H(+)</text>
        <dbReference type="Rhea" id="RHEA:18453"/>
        <dbReference type="Rhea" id="RHEA-COMP:11881"/>
        <dbReference type="ChEBI" id="CHEBI:15377"/>
        <dbReference type="ChEBI" id="CHEBI:15378"/>
        <dbReference type="ChEBI" id="CHEBI:27517"/>
        <dbReference type="ChEBI" id="CHEBI:30616"/>
        <dbReference type="ChEBI" id="CHEBI:43474"/>
        <dbReference type="ChEBI" id="CHEBI:456216"/>
        <dbReference type="EC" id="7.5.2.3"/>
    </reaction>
</comment>
<comment type="subunit">
    <text evidence="2">Homodimer.</text>
</comment>
<comment type="subcellular location">
    <subcellularLocation>
        <location evidence="2">Cell inner membrane</location>
        <topology evidence="2">Multi-pass membrane protein</topology>
    </subcellularLocation>
</comment>
<comment type="domain">
    <text>In NdvA the ATP-binding domain (NBD) and the transmembrane domain (TMD) are fused.</text>
</comment>
<comment type="similarity">
    <text evidence="2">Belongs to the ABC transporter superfamily. Beta-(1--&gt;2)glucan exporter (TC 3.A.1.108.1) family.</text>
</comment>
<comment type="sequence caution" evidence="3">
    <conflict type="erroneous initiation">
        <sequence resource="EMBL-CDS" id="AAB09036"/>
    </conflict>
</comment>
<reference key="1">
    <citation type="submission" date="1996-08" db="EMBL/GenBank/DDBJ databases">
        <authorList>
            <person name="Upeslacis E."/>
            <person name="Ihler G.M."/>
        </authorList>
    </citation>
    <scope>NUCLEOTIDE SEQUENCE [GENOMIC DNA]</scope>
</reference>
<proteinExistence type="inferred from homology"/>
<organism>
    <name type="scientific">Bartonella bacilliformis</name>
    <dbReference type="NCBI Taxonomy" id="774"/>
    <lineage>
        <taxon>Bacteria</taxon>
        <taxon>Pseudomonadati</taxon>
        <taxon>Pseudomonadota</taxon>
        <taxon>Alphaproteobacteria</taxon>
        <taxon>Hyphomicrobiales</taxon>
        <taxon>Bartonellaceae</taxon>
        <taxon>Bartonella</taxon>
    </lineage>
</organism>
<dbReference type="EC" id="7.5.2.3" evidence="2"/>
<dbReference type="EMBL" id="U68242">
    <property type="protein sequence ID" value="AAB09036.1"/>
    <property type="status" value="ALT_INIT"/>
    <property type="molecule type" value="Genomic_DNA"/>
</dbReference>
<dbReference type="SMR" id="P70864"/>
<dbReference type="GO" id="GO:0005886">
    <property type="term" value="C:plasma membrane"/>
    <property type="evidence" value="ECO:0007669"/>
    <property type="project" value="UniProtKB-SubCell"/>
</dbReference>
<dbReference type="GO" id="GO:0015441">
    <property type="term" value="F:ABC-type beta-glucan transporter activity"/>
    <property type="evidence" value="ECO:0007669"/>
    <property type="project" value="UniProtKB-EC"/>
</dbReference>
<dbReference type="GO" id="GO:0015421">
    <property type="term" value="F:ABC-type oligopeptide transporter activity"/>
    <property type="evidence" value="ECO:0007669"/>
    <property type="project" value="TreeGrafter"/>
</dbReference>
<dbReference type="GO" id="GO:0005524">
    <property type="term" value="F:ATP binding"/>
    <property type="evidence" value="ECO:0007669"/>
    <property type="project" value="UniProtKB-KW"/>
</dbReference>
<dbReference type="GO" id="GO:0016887">
    <property type="term" value="F:ATP hydrolysis activity"/>
    <property type="evidence" value="ECO:0007669"/>
    <property type="project" value="InterPro"/>
</dbReference>
<dbReference type="CDD" id="cd18562">
    <property type="entry name" value="ABC_6TM_NdvA_beta-glucan_exporter_like"/>
    <property type="match status" value="1"/>
</dbReference>
<dbReference type="FunFam" id="3.40.50.300:FF:000221">
    <property type="entry name" value="Multidrug ABC transporter ATP-binding protein"/>
    <property type="match status" value="1"/>
</dbReference>
<dbReference type="Gene3D" id="1.20.1560.10">
    <property type="entry name" value="ABC transporter type 1, transmembrane domain"/>
    <property type="match status" value="1"/>
</dbReference>
<dbReference type="Gene3D" id="3.40.50.300">
    <property type="entry name" value="P-loop containing nucleotide triphosphate hydrolases"/>
    <property type="match status" value="1"/>
</dbReference>
<dbReference type="InterPro" id="IPR003593">
    <property type="entry name" value="AAA+_ATPase"/>
</dbReference>
<dbReference type="InterPro" id="IPR011527">
    <property type="entry name" value="ABC1_TM_dom"/>
</dbReference>
<dbReference type="InterPro" id="IPR036640">
    <property type="entry name" value="ABC1_TM_sf"/>
</dbReference>
<dbReference type="InterPro" id="IPR003439">
    <property type="entry name" value="ABC_transporter-like_ATP-bd"/>
</dbReference>
<dbReference type="InterPro" id="IPR017871">
    <property type="entry name" value="ABC_transporter-like_CS"/>
</dbReference>
<dbReference type="InterPro" id="IPR005896">
    <property type="entry name" value="NdvA"/>
</dbReference>
<dbReference type="InterPro" id="IPR027417">
    <property type="entry name" value="P-loop_NTPase"/>
</dbReference>
<dbReference type="InterPro" id="IPR039421">
    <property type="entry name" value="Type_1_exporter"/>
</dbReference>
<dbReference type="NCBIfam" id="TIGR01192">
    <property type="entry name" value="chvA"/>
    <property type="match status" value="1"/>
</dbReference>
<dbReference type="NCBIfam" id="NF010178">
    <property type="entry name" value="PRK13657.1"/>
    <property type="match status" value="1"/>
</dbReference>
<dbReference type="PANTHER" id="PTHR43394:SF1">
    <property type="entry name" value="ATP-BINDING CASSETTE SUB-FAMILY B MEMBER 10, MITOCHONDRIAL"/>
    <property type="match status" value="1"/>
</dbReference>
<dbReference type="PANTHER" id="PTHR43394">
    <property type="entry name" value="ATP-DEPENDENT PERMEASE MDL1, MITOCHONDRIAL"/>
    <property type="match status" value="1"/>
</dbReference>
<dbReference type="Pfam" id="PF00664">
    <property type="entry name" value="ABC_membrane"/>
    <property type="match status" value="1"/>
</dbReference>
<dbReference type="Pfam" id="PF00005">
    <property type="entry name" value="ABC_tran"/>
    <property type="match status" value="1"/>
</dbReference>
<dbReference type="SMART" id="SM00382">
    <property type="entry name" value="AAA"/>
    <property type="match status" value="1"/>
</dbReference>
<dbReference type="SUPFAM" id="SSF90123">
    <property type="entry name" value="ABC transporter transmembrane region"/>
    <property type="match status" value="1"/>
</dbReference>
<dbReference type="SUPFAM" id="SSF52540">
    <property type="entry name" value="P-loop containing nucleoside triphosphate hydrolases"/>
    <property type="match status" value="1"/>
</dbReference>
<dbReference type="PROSITE" id="PS50929">
    <property type="entry name" value="ABC_TM1F"/>
    <property type="match status" value="1"/>
</dbReference>
<dbReference type="PROSITE" id="PS00211">
    <property type="entry name" value="ABC_TRANSPORTER_1"/>
    <property type="match status" value="1"/>
</dbReference>
<dbReference type="PROSITE" id="PS50893">
    <property type="entry name" value="ABC_TRANSPORTER_2"/>
    <property type="match status" value="1"/>
</dbReference>
<dbReference type="PROSITE" id="PS51317">
    <property type="entry name" value="NDVA"/>
    <property type="match status" value="1"/>
</dbReference>
<protein>
    <recommendedName>
        <fullName evidence="2">Beta-(1--&gt;2)glucan export ATP-binding/permease protein NdvA</fullName>
        <ecNumber evidence="2">7.5.2.3</ecNumber>
    </recommendedName>
</protein>
<keyword id="KW-0067">ATP-binding</keyword>
<keyword id="KW-0997">Cell inner membrane</keyword>
<keyword id="KW-1003">Cell membrane</keyword>
<keyword id="KW-0472">Membrane</keyword>
<keyword id="KW-0547">Nucleotide-binding</keyword>
<keyword id="KW-0762">Sugar transport</keyword>
<keyword id="KW-1278">Translocase</keyword>
<keyword id="KW-0812">Transmembrane</keyword>
<keyword id="KW-1133">Transmembrane helix</keyword>
<keyword id="KW-0813">Transport</keyword>
<feature type="chain" id="PRO_0000290239" description="Beta-(1--&gt;2)glucan export ATP-binding/permease protein NdvA">
    <location>
        <begin position="1"/>
        <end position="595"/>
    </location>
</feature>
<feature type="transmembrane region" description="Helical" evidence="2">
    <location>
        <begin position="21"/>
        <end position="41"/>
    </location>
</feature>
<feature type="transmembrane region" description="Helical" evidence="2">
    <location>
        <begin position="56"/>
        <end position="76"/>
    </location>
</feature>
<feature type="transmembrane region" description="Helical" evidence="2">
    <location>
        <begin position="129"/>
        <end position="149"/>
    </location>
</feature>
<feature type="transmembrane region" description="Helical" evidence="2">
    <location>
        <begin position="158"/>
        <end position="178"/>
    </location>
</feature>
<feature type="transmembrane region" description="Helical" evidence="2">
    <location>
        <begin position="252"/>
        <end position="272"/>
    </location>
</feature>
<feature type="domain" description="ABC transmembrane type-1" evidence="2">
    <location>
        <begin position="21"/>
        <end position="301"/>
    </location>
</feature>
<feature type="domain" description="ABC transporter" evidence="2">
    <location>
        <begin position="335"/>
        <end position="569"/>
    </location>
</feature>
<feature type="binding site" evidence="2">
    <location>
        <begin position="368"/>
        <end position="375"/>
    </location>
    <ligand>
        <name>ATP</name>
        <dbReference type="ChEBI" id="CHEBI:30616"/>
    </ligand>
</feature>